<comment type="function">
    <text evidence="4 5">Lectin-domain containing receptor kinase involved in salt stress response (PubMed:24907341). Acts as a negative regulator of salt tolerance (PubMed:24907341). Mediates salt sensitivity by phosphorylating and activating MPK3 and MPK6 (PubMed:24907341). Promotes ethylene production and mediates salt-induced ethylene signaling (PubMed:24907341). Promotes the accumulation of reactive oxygen species (ROS) under salt stress conditions (PubMed:24907341). Its kinase activity is triggered by salt stress and is required for its function in salt stress response (PubMed:24907341). Phosphorylates B'KAPPA, a B regulatory subunit of phosphatase 2A (PP2A) (PubMed:31221736).</text>
</comment>
<comment type="catalytic activity">
    <reaction evidence="4">
        <text>L-seryl-[protein] + ATP = O-phospho-L-seryl-[protein] + ADP + H(+)</text>
        <dbReference type="Rhea" id="RHEA:17989"/>
        <dbReference type="Rhea" id="RHEA-COMP:9863"/>
        <dbReference type="Rhea" id="RHEA-COMP:11604"/>
        <dbReference type="ChEBI" id="CHEBI:15378"/>
        <dbReference type="ChEBI" id="CHEBI:29999"/>
        <dbReference type="ChEBI" id="CHEBI:30616"/>
        <dbReference type="ChEBI" id="CHEBI:83421"/>
        <dbReference type="ChEBI" id="CHEBI:456216"/>
        <dbReference type="EC" id="2.7.11.1"/>
    </reaction>
    <physiologicalReaction direction="left-to-right" evidence="4">
        <dbReference type="Rhea" id="RHEA:17990"/>
    </physiologicalReaction>
</comment>
<comment type="catalytic activity">
    <reaction evidence="4">
        <text>L-threonyl-[protein] + ATP = O-phospho-L-threonyl-[protein] + ADP + H(+)</text>
        <dbReference type="Rhea" id="RHEA:46608"/>
        <dbReference type="Rhea" id="RHEA-COMP:11060"/>
        <dbReference type="Rhea" id="RHEA-COMP:11605"/>
        <dbReference type="ChEBI" id="CHEBI:15378"/>
        <dbReference type="ChEBI" id="CHEBI:30013"/>
        <dbReference type="ChEBI" id="CHEBI:30616"/>
        <dbReference type="ChEBI" id="CHEBI:61977"/>
        <dbReference type="ChEBI" id="CHEBI:456216"/>
        <dbReference type="EC" id="2.7.11.1"/>
    </reaction>
    <physiologicalReaction direction="left-to-right" evidence="4">
        <dbReference type="Rhea" id="RHEA:46609"/>
    </physiologicalReaction>
</comment>
<comment type="activity regulation">
    <text evidence="4">Activated by autophosphorylation in response to salt stress.</text>
</comment>
<comment type="subunit">
    <text evidence="5">Interacts with B'KAPPA.</text>
</comment>
<comment type="subcellular location">
    <subcellularLocation>
        <location evidence="4">Cell membrane</location>
        <topology evidence="1">Single-pass type I membrane protein</topology>
    </subcellularLocation>
</comment>
<comment type="tissue specificity">
    <text evidence="4">Expressed in root epidermal cells.</text>
</comment>
<comment type="induction">
    <text evidence="4">Induced by salt stress.</text>
</comment>
<comment type="PTM">
    <text evidence="5">Autophosphorylated at Thr-511, Thr-515 or Thr-516, and Thr-521 in response to salt stress (PubMed:31221736). Dephosphorylated by phosphatase 2A in response to salt stress (PubMed:31221736).</text>
</comment>
<comment type="miscellaneous">
    <text evidence="4">Plants silencing SIT1 exhibit increased tolerance to salt stress.</text>
</comment>
<comment type="similarity">
    <text evidence="7">In the C-terminal section; belongs to the protein kinase superfamily. Ser/Thr protein kinase family.</text>
</comment>
<comment type="similarity">
    <text evidence="7">In the N-terminal section; belongs to the leguminous lectin family.</text>
</comment>
<feature type="signal peptide" evidence="1">
    <location>
        <begin position="1"/>
        <end position="27"/>
    </location>
</feature>
<feature type="chain" id="PRO_5013533136" description="L-type lectin-domain containing receptor kinase SIT1">
    <location>
        <begin position="28"/>
        <end position="674"/>
    </location>
</feature>
<feature type="topological domain" description="Extracellular" evidence="7">
    <location>
        <begin position="28"/>
        <end position="301"/>
    </location>
</feature>
<feature type="transmembrane region" description="Helical" evidence="1">
    <location>
        <begin position="302"/>
        <end position="322"/>
    </location>
</feature>
<feature type="topological domain" description="Cytoplasmic" evidence="7">
    <location>
        <begin position="323"/>
        <end position="674"/>
    </location>
</feature>
<feature type="domain" description="Protein kinase" evidence="2">
    <location>
        <begin position="357"/>
        <end position="636"/>
    </location>
</feature>
<feature type="region of interest" description="Legume-lectin like" evidence="7">
    <location>
        <begin position="31"/>
        <end position="275"/>
    </location>
</feature>
<feature type="active site" description="Proton acceptor" evidence="2">
    <location>
        <position position="482"/>
    </location>
</feature>
<feature type="binding site" evidence="2">
    <location>
        <begin position="363"/>
        <end position="371"/>
    </location>
    <ligand>
        <name>ATP</name>
        <dbReference type="ChEBI" id="CHEBI:30616"/>
    </ligand>
</feature>
<feature type="binding site" evidence="2">
    <location>
        <position position="386"/>
    </location>
    <ligand>
        <name>ATP</name>
        <dbReference type="ChEBI" id="CHEBI:30616"/>
    </ligand>
</feature>
<feature type="modified residue" description="Phosphothreonine" evidence="5">
    <location>
        <position position="511"/>
    </location>
</feature>
<feature type="modified residue" description="Phosphothreonine" evidence="5">
    <location>
        <position position="515"/>
    </location>
</feature>
<feature type="modified residue" description="Phosphothreonine" evidence="5">
    <location>
        <position position="516"/>
    </location>
</feature>
<feature type="modified residue" description="Phosphothreonine" evidence="5">
    <location>
        <position position="521"/>
    </location>
</feature>
<feature type="glycosylation site" description="N-linked (GlcNAc...) asparagine" evidence="3">
    <location>
        <position position="42"/>
    </location>
</feature>
<feature type="glycosylation site" description="N-linked (GlcNAc...) asparagine" evidence="3">
    <location>
        <position position="61"/>
    </location>
</feature>
<feature type="glycosylation site" description="N-linked (GlcNAc...) asparagine" evidence="3">
    <location>
        <position position="143"/>
    </location>
</feature>
<feature type="glycosylation site" description="N-linked (GlcNAc...) asparagine" evidence="3">
    <location>
        <position position="196"/>
    </location>
</feature>
<feature type="glycosylation site" description="N-linked (GlcNAc...) asparagine" evidence="3">
    <location>
        <position position="219"/>
    </location>
</feature>
<feature type="glycosylation site" description="N-linked (GlcNAc...) asparagine" evidence="3">
    <location>
        <position position="240"/>
    </location>
</feature>
<feature type="glycosylation site" description="N-linked (GlcNAc...) asparagine" evidence="3">
    <location>
        <position position="281"/>
    </location>
</feature>
<feature type="mutagenesis site" description="Loss of kinase activity." evidence="4">
    <original>K</original>
    <variation>E</variation>
    <location>
        <position position="386"/>
    </location>
</feature>
<feature type="mutagenesis site" description="Loss of kinase activity." evidence="7">
    <original>D</original>
    <variation>A</variation>
    <location>
        <position position="482"/>
    </location>
</feature>
<feature type="mutagenesis site" description="Abolishes autophosphorylation and activation of kinase activity." evidence="5">
    <original>T</original>
    <variation>A</variation>
    <location>
        <position position="511"/>
    </location>
</feature>
<feature type="mutagenesis site" description="Abolishes autophosphorylation and activation of kinase activity." evidence="5">
    <original>TT</original>
    <variation>AA</variation>
    <location>
        <begin position="515"/>
        <end position="516"/>
    </location>
</feature>
<reference key="1">
    <citation type="journal article" date="2005" name="Nature">
        <title>The map-based sequence of the rice genome.</title>
        <authorList>
            <consortium name="International rice genome sequencing project (IRGSP)"/>
        </authorList>
    </citation>
    <scope>NUCLEOTIDE SEQUENCE [LARGE SCALE GENOMIC DNA]</scope>
    <source>
        <strain>cv. Nipponbare</strain>
    </source>
</reference>
<reference key="2">
    <citation type="journal article" date="2008" name="Nucleic Acids Res.">
        <title>The rice annotation project database (RAP-DB): 2008 update.</title>
        <authorList>
            <consortium name="The rice annotation project (RAP)"/>
        </authorList>
    </citation>
    <scope>GENOME REANNOTATION</scope>
    <source>
        <strain>cv. Nipponbare</strain>
    </source>
</reference>
<reference key="3">
    <citation type="journal article" date="2013" name="Rice">
        <title>Improvement of the Oryza sativa Nipponbare reference genome using next generation sequence and optical map data.</title>
        <authorList>
            <person name="Kawahara Y."/>
            <person name="de la Bastide M."/>
            <person name="Hamilton J.P."/>
            <person name="Kanamori H."/>
            <person name="McCombie W.R."/>
            <person name="Ouyang S."/>
            <person name="Schwartz D.C."/>
            <person name="Tanaka T."/>
            <person name="Wu J."/>
            <person name="Zhou S."/>
            <person name="Childs K.L."/>
            <person name="Davidson R.M."/>
            <person name="Lin H."/>
            <person name="Quesada-Ocampo L."/>
            <person name="Vaillancourt B."/>
            <person name="Sakai H."/>
            <person name="Lee S.S."/>
            <person name="Kim J."/>
            <person name="Numa H."/>
            <person name="Itoh T."/>
            <person name="Buell C.R."/>
            <person name="Matsumoto T."/>
        </authorList>
    </citation>
    <scope>GENOME REANNOTATION</scope>
    <source>
        <strain>cv. Nipponbare</strain>
    </source>
</reference>
<reference key="4">
    <citation type="journal article" date="2003" name="Science">
        <title>Collection, mapping, and annotation of over 28,000 cDNA clones from japonica rice.</title>
        <authorList>
            <consortium name="The rice full-length cDNA consortium"/>
        </authorList>
    </citation>
    <scope>NUCLEOTIDE SEQUENCE [LARGE SCALE MRNA]</scope>
    <source>
        <strain>cv. Nipponbare</strain>
    </source>
</reference>
<reference key="5">
    <citation type="journal article" date="2014" name="Plant Cell">
        <title>The receptor-like kinase SIT1 mediates salt sensitivity by activating MAPK3/6 and regulating ethylene homeostasis in rice.</title>
        <authorList>
            <person name="Li C.H."/>
            <person name="Wang G."/>
            <person name="Zhao J.L."/>
            <person name="Zhang L.Q."/>
            <person name="Ai L.F."/>
            <person name="Han Y.F."/>
            <person name="Sun D.Y."/>
            <person name="Zhang S.W."/>
            <person name="Sun Y."/>
        </authorList>
    </citation>
    <scope>FUNCTION</scope>
    <scope>CATALYTIC ACTIVITY</scope>
    <scope>ACTIVITY REGULATION</scope>
    <scope>SUBCELLULAR LOCATION</scope>
    <scope>TISSUE SPECIFICITY</scope>
    <scope>INDUCTION BY SALT STRESS</scope>
    <scope>MUTAGENESIS OF LYS-386 AND ASP-482</scope>
</reference>
<reference key="6">
    <citation type="journal article" date="2019" name="Plant Cell">
        <title>Mutual regulation of receptor-like kinase SIT1 and B'kappa-PP2A shapes the early response of rice to salt stress.</title>
        <authorList>
            <person name="Zhao J.L."/>
            <person name="Zhang L.Q."/>
            <person name="Liu N."/>
            <person name="Xu S.L."/>
            <person name="Yue Z.L."/>
            <person name="Zhang L.L."/>
            <person name="Deng Z.P."/>
            <person name="Burlingame A.L."/>
            <person name="Sun D.Y."/>
            <person name="Wang Z.Y."/>
            <person name="Sun Y."/>
            <person name="Zhang S.W."/>
        </authorList>
    </citation>
    <scope>FUNCTION</scope>
    <scope>INTERACTION WITH B'KAPPA</scope>
    <scope>PHOSPHORYLATION AT THR-511; THR-515; THR-516 AND THR-521</scope>
    <scope>MUTAGENESIS OF THR-511 AND 515-THR-THR-516</scope>
</reference>
<protein>
    <recommendedName>
        <fullName evidence="7">L-type lectin-domain containing receptor kinase SIT1</fullName>
        <ecNumber evidence="4">2.7.11.1</ecNumber>
    </recommendedName>
    <alternativeName>
        <fullName evidence="6">Protein SALT INTOLERANCE 1</fullName>
    </alternativeName>
</protein>
<evidence type="ECO:0000255" key="1"/>
<evidence type="ECO:0000255" key="2">
    <source>
        <dbReference type="PROSITE-ProRule" id="PRU00159"/>
    </source>
</evidence>
<evidence type="ECO:0000255" key="3">
    <source>
        <dbReference type="PROSITE-ProRule" id="PRU00498"/>
    </source>
</evidence>
<evidence type="ECO:0000269" key="4">
    <source>
    </source>
</evidence>
<evidence type="ECO:0000269" key="5">
    <source>
    </source>
</evidence>
<evidence type="ECO:0000303" key="6">
    <source>
    </source>
</evidence>
<evidence type="ECO:0000305" key="7"/>
<evidence type="ECO:0000312" key="8">
    <source>
        <dbReference type="EMBL" id="BAD25367.1"/>
    </source>
</evidence>
<evidence type="ECO:0000312" key="9">
    <source>
        <dbReference type="EMBL" id="BAF09461.1"/>
    </source>
</evidence>
<accession>Q6H7D2</accession>
<name>SIT1_ORYSJ</name>
<keyword id="KW-0067">ATP-binding</keyword>
<keyword id="KW-1003">Cell membrane</keyword>
<keyword id="KW-0325">Glycoprotein</keyword>
<keyword id="KW-0418">Kinase</keyword>
<keyword id="KW-0430">Lectin</keyword>
<keyword id="KW-0472">Membrane</keyword>
<keyword id="KW-0547">Nucleotide-binding</keyword>
<keyword id="KW-0597">Phosphoprotein</keyword>
<keyword id="KW-0675">Receptor</keyword>
<keyword id="KW-1185">Reference proteome</keyword>
<keyword id="KW-0723">Serine/threonine-protein kinase</keyword>
<keyword id="KW-0732">Signal</keyword>
<keyword id="KW-0346">Stress response</keyword>
<keyword id="KW-0808">Transferase</keyword>
<keyword id="KW-0812">Transmembrane</keyword>
<keyword id="KW-1133">Transmembrane helix</keyword>
<gene>
    <name evidence="6" type="primary">SIT1</name>
    <name evidence="9" type="ordered locus">Os02g0640500</name>
    <name evidence="7" type="ordered locus">LOC_Os02g42780</name>
    <name evidence="8" type="ORF">P0010C01.40</name>
</gene>
<dbReference type="EC" id="2.7.11.1" evidence="4"/>
<dbReference type="EMBL" id="AP004768">
    <property type="protein sequence ID" value="BAD25367.1"/>
    <property type="molecule type" value="Genomic_DNA"/>
</dbReference>
<dbReference type="EMBL" id="AP008208">
    <property type="protein sequence ID" value="BAF09461.1"/>
    <property type="molecule type" value="Genomic_DNA"/>
</dbReference>
<dbReference type="EMBL" id="AP014958">
    <property type="protein sequence ID" value="BAS79982.1"/>
    <property type="molecule type" value="Genomic_DNA"/>
</dbReference>
<dbReference type="EMBL" id="AK107491">
    <property type="protein sequence ID" value="BAG98063.1"/>
    <property type="molecule type" value="mRNA"/>
</dbReference>
<dbReference type="SMR" id="Q6H7D2"/>
<dbReference type="FunCoup" id="Q6H7D2">
    <property type="interactions" value="220"/>
</dbReference>
<dbReference type="STRING" id="39947.Q6H7D2"/>
<dbReference type="GlyCosmos" id="Q6H7D2">
    <property type="glycosylation" value="7 sites, No reported glycans"/>
</dbReference>
<dbReference type="iPTMnet" id="Q6H7D2"/>
<dbReference type="PaxDb" id="39947-Q6H7D2"/>
<dbReference type="EnsemblPlants" id="Os02t0640500-01">
    <property type="protein sequence ID" value="Os02t0640500-01"/>
    <property type="gene ID" value="Os02g0640500"/>
</dbReference>
<dbReference type="Gramene" id="Os02t0640500-01">
    <property type="protein sequence ID" value="Os02t0640500-01"/>
    <property type="gene ID" value="Os02g0640500"/>
</dbReference>
<dbReference type="KEGG" id="dosa:Os02g0640500"/>
<dbReference type="KEGG" id="osa:4330111"/>
<dbReference type="eggNOG" id="ENOG502QSJ4">
    <property type="taxonomic scope" value="Eukaryota"/>
</dbReference>
<dbReference type="HOGENOM" id="CLU_000288_62_3_1"/>
<dbReference type="InParanoid" id="Q6H7D2"/>
<dbReference type="OMA" id="EWEVAFG"/>
<dbReference type="OrthoDB" id="543442at2759"/>
<dbReference type="Proteomes" id="UP000000763">
    <property type="component" value="Chromosome 2"/>
</dbReference>
<dbReference type="Proteomes" id="UP000059680">
    <property type="component" value="Chromosome 2"/>
</dbReference>
<dbReference type="GO" id="GO:0005886">
    <property type="term" value="C:plasma membrane"/>
    <property type="evidence" value="ECO:0000314"/>
    <property type="project" value="UniProtKB"/>
</dbReference>
<dbReference type="GO" id="GO:0005524">
    <property type="term" value="F:ATP binding"/>
    <property type="evidence" value="ECO:0007669"/>
    <property type="project" value="UniProtKB-KW"/>
</dbReference>
<dbReference type="GO" id="GO:0030246">
    <property type="term" value="F:carbohydrate binding"/>
    <property type="evidence" value="ECO:0007669"/>
    <property type="project" value="UniProtKB-KW"/>
</dbReference>
<dbReference type="GO" id="GO:0106310">
    <property type="term" value="F:protein serine kinase activity"/>
    <property type="evidence" value="ECO:0007669"/>
    <property type="project" value="RHEA"/>
</dbReference>
<dbReference type="GO" id="GO:0004675">
    <property type="term" value="F:transmembrane receptor protein serine/threonine kinase activity"/>
    <property type="evidence" value="ECO:0000314"/>
    <property type="project" value="UniProtKB"/>
</dbReference>
<dbReference type="GO" id="GO:0042742">
    <property type="term" value="P:defense response to bacterium"/>
    <property type="evidence" value="ECO:0000318"/>
    <property type="project" value="GO_Central"/>
</dbReference>
<dbReference type="GO" id="GO:0002229">
    <property type="term" value="P:defense response to oomycetes"/>
    <property type="evidence" value="ECO:0000318"/>
    <property type="project" value="GO_Central"/>
</dbReference>
<dbReference type="GO" id="GO:1901001">
    <property type="term" value="P:negative regulation of response to salt stress"/>
    <property type="evidence" value="ECO:0000315"/>
    <property type="project" value="UniProtKB"/>
</dbReference>
<dbReference type="GO" id="GO:0006468">
    <property type="term" value="P:protein phosphorylation"/>
    <property type="evidence" value="ECO:0000314"/>
    <property type="project" value="UniProtKB"/>
</dbReference>
<dbReference type="CDD" id="cd06899">
    <property type="entry name" value="lectin_legume_LecRK_Arcelin_ConA"/>
    <property type="match status" value="1"/>
</dbReference>
<dbReference type="CDD" id="cd14066">
    <property type="entry name" value="STKc_IRAK"/>
    <property type="match status" value="1"/>
</dbReference>
<dbReference type="FunFam" id="2.60.120.200:FF:000051">
    <property type="entry name" value="L-type lectin-domain containing receptor kinase V.9"/>
    <property type="match status" value="1"/>
</dbReference>
<dbReference type="FunFam" id="3.30.200.20:FF:000112">
    <property type="entry name" value="Lectin-domain containing receptor kinase A4.3"/>
    <property type="match status" value="1"/>
</dbReference>
<dbReference type="FunFam" id="1.10.510.10:FF:000517">
    <property type="entry name" value="Putative receptor kinase Lecrk"/>
    <property type="match status" value="1"/>
</dbReference>
<dbReference type="Gene3D" id="2.60.120.200">
    <property type="match status" value="1"/>
</dbReference>
<dbReference type="Gene3D" id="3.30.200.20">
    <property type="entry name" value="Phosphorylase Kinase, domain 1"/>
    <property type="match status" value="1"/>
</dbReference>
<dbReference type="Gene3D" id="1.10.510.10">
    <property type="entry name" value="Transferase(Phosphotransferase) domain 1"/>
    <property type="match status" value="1"/>
</dbReference>
<dbReference type="InterPro" id="IPR013320">
    <property type="entry name" value="ConA-like_dom_sf"/>
</dbReference>
<dbReference type="InterPro" id="IPR011009">
    <property type="entry name" value="Kinase-like_dom_sf"/>
</dbReference>
<dbReference type="InterPro" id="IPR050528">
    <property type="entry name" value="L-type_Lectin-RKs"/>
</dbReference>
<dbReference type="InterPro" id="IPR019825">
    <property type="entry name" value="Lectin_legB_Mn/Ca_BS"/>
</dbReference>
<dbReference type="InterPro" id="IPR001220">
    <property type="entry name" value="Legume_lectin_dom"/>
</dbReference>
<dbReference type="InterPro" id="IPR000719">
    <property type="entry name" value="Prot_kinase_dom"/>
</dbReference>
<dbReference type="InterPro" id="IPR017441">
    <property type="entry name" value="Protein_kinase_ATP_BS"/>
</dbReference>
<dbReference type="InterPro" id="IPR008271">
    <property type="entry name" value="Ser/Thr_kinase_AS"/>
</dbReference>
<dbReference type="PANTHER" id="PTHR27007">
    <property type="match status" value="1"/>
</dbReference>
<dbReference type="Pfam" id="PF00139">
    <property type="entry name" value="Lectin_legB"/>
    <property type="match status" value="1"/>
</dbReference>
<dbReference type="Pfam" id="PF00069">
    <property type="entry name" value="Pkinase"/>
    <property type="match status" value="1"/>
</dbReference>
<dbReference type="SMART" id="SM00220">
    <property type="entry name" value="S_TKc"/>
    <property type="match status" value="1"/>
</dbReference>
<dbReference type="SUPFAM" id="SSF49899">
    <property type="entry name" value="Concanavalin A-like lectins/glucanases"/>
    <property type="match status" value="1"/>
</dbReference>
<dbReference type="SUPFAM" id="SSF56112">
    <property type="entry name" value="Protein kinase-like (PK-like)"/>
    <property type="match status" value="1"/>
</dbReference>
<dbReference type="PROSITE" id="PS00307">
    <property type="entry name" value="LECTIN_LEGUME_BETA"/>
    <property type="match status" value="1"/>
</dbReference>
<dbReference type="PROSITE" id="PS00107">
    <property type="entry name" value="PROTEIN_KINASE_ATP"/>
    <property type="match status" value="1"/>
</dbReference>
<dbReference type="PROSITE" id="PS50011">
    <property type="entry name" value="PROTEIN_KINASE_DOM"/>
    <property type="match status" value="1"/>
</dbReference>
<dbReference type="PROSITE" id="PS00108">
    <property type="entry name" value="PROTEIN_KINASE_ST"/>
    <property type="match status" value="1"/>
</dbReference>
<proteinExistence type="evidence at protein level"/>
<sequence length="674" mass="73240">MRRPELIMRSLPLILFLSLGSFHLAAAAVDDQFTFDGFAGVNLTLDGTAVVTPGGLLMLTNGTTLLKGHAFYPSPLRFFHEATSGGGSSTVRSFSTAFVFGIVSEYADLSSPGLAFVVAKSRDFSSALQSQYMGLANARNNGNASNHFLAVELDTIVNAEFGDMSDNHVGIDVDGLASAAADDAGYHDDRTGAFVNMSLLSRAAARVWVDFDARTSLVNVTMAPLELPKPTTPLLSAAVNLSAVIEDEAYVGFSSSTGVVASRHYVLAWSFKMDGPAPSLNVSKLPALPVTIARAPSNVLKILLPIASAALVSALAIAVLVIHRRRRRYAELKEEWEVAFGPHRFSYKDLFRATNGFSDERLLGFGGFGRVYKGVLLVSRVEIAVKKVSHESRQGMKEFIAEVVSIGQLRHRNLVQLLGYCRQKGELLLVYDYMPNGSLDKYLYAENSKILSWAQRFRIIKGIASSILYLHEDWEQVVLHRDIKASNVLLDAEMNCRLGDFGLARLYDRGTDPHTTHVVGTIGYLAPELGHTGRPSKASDIFAFGVFMLEVTCGRRPVLQDTNGGQLLLVDMVLEHWRQGTVTDAVDPRLQGDFAVEEASLVLKLCLLCSHPLPSARPGIRQVVQLLDGAMPLPELSQAHLSCNMLALMQNQMGNSCSVASSVAGNISDIPRAR</sequence>
<organism>
    <name type="scientific">Oryza sativa subsp. japonica</name>
    <name type="common">Rice</name>
    <dbReference type="NCBI Taxonomy" id="39947"/>
    <lineage>
        <taxon>Eukaryota</taxon>
        <taxon>Viridiplantae</taxon>
        <taxon>Streptophyta</taxon>
        <taxon>Embryophyta</taxon>
        <taxon>Tracheophyta</taxon>
        <taxon>Spermatophyta</taxon>
        <taxon>Magnoliopsida</taxon>
        <taxon>Liliopsida</taxon>
        <taxon>Poales</taxon>
        <taxon>Poaceae</taxon>
        <taxon>BOP clade</taxon>
        <taxon>Oryzoideae</taxon>
        <taxon>Oryzeae</taxon>
        <taxon>Oryzinae</taxon>
        <taxon>Oryza</taxon>
        <taxon>Oryza sativa</taxon>
    </lineage>
</organism>